<proteinExistence type="inferred from homology"/>
<comment type="function">
    <text evidence="1">Catalyzes the conversion of dethiobiotin (DTB) to biotin by the insertion of a sulfur atom into dethiobiotin via a radical-based mechanism.</text>
</comment>
<comment type="catalytic activity">
    <reaction evidence="1">
        <text>(4R,5S)-dethiobiotin + (sulfur carrier)-SH + 2 reduced [2Fe-2S]-[ferredoxin] + 2 S-adenosyl-L-methionine = (sulfur carrier)-H + biotin + 2 5'-deoxyadenosine + 2 L-methionine + 2 oxidized [2Fe-2S]-[ferredoxin]</text>
        <dbReference type="Rhea" id="RHEA:22060"/>
        <dbReference type="Rhea" id="RHEA-COMP:10000"/>
        <dbReference type="Rhea" id="RHEA-COMP:10001"/>
        <dbReference type="Rhea" id="RHEA-COMP:14737"/>
        <dbReference type="Rhea" id="RHEA-COMP:14739"/>
        <dbReference type="ChEBI" id="CHEBI:17319"/>
        <dbReference type="ChEBI" id="CHEBI:29917"/>
        <dbReference type="ChEBI" id="CHEBI:33737"/>
        <dbReference type="ChEBI" id="CHEBI:33738"/>
        <dbReference type="ChEBI" id="CHEBI:57586"/>
        <dbReference type="ChEBI" id="CHEBI:57844"/>
        <dbReference type="ChEBI" id="CHEBI:59789"/>
        <dbReference type="ChEBI" id="CHEBI:64428"/>
        <dbReference type="ChEBI" id="CHEBI:149473"/>
        <dbReference type="EC" id="2.8.1.6"/>
    </reaction>
</comment>
<comment type="cofactor">
    <cofactor evidence="1">
        <name>[4Fe-4S] cluster</name>
        <dbReference type="ChEBI" id="CHEBI:49883"/>
    </cofactor>
    <text evidence="1">Binds 1 [4Fe-4S] cluster. The cluster is coordinated with 3 cysteines and an exchangeable S-adenosyl-L-methionine.</text>
</comment>
<comment type="cofactor">
    <cofactor evidence="1">
        <name>[2Fe-2S] cluster</name>
        <dbReference type="ChEBI" id="CHEBI:190135"/>
    </cofactor>
    <text evidence="1">Binds 1 [2Fe-2S] cluster. The cluster is coordinated with 3 cysteines and 1 arginine.</text>
</comment>
<comment type="pathway">
    <text evidence="1">Cofactor biosynthesis; biotin biosynthesis; biotin from 7,8-diaminononanoate: step 2/2.</text>
</comment>
<comment type="subunit">
    <text evidence="1">Homodimer.</text>
</comment>
<comment type="similarity">
    <text evidence="1">Belongs to the radical SAM superfamily. Biotin synthase family.</text>
</comment>
<evidence type="ECO:0000255" key="1">
    <source>
        <dbReference type="HAMAP-Rule" id="MF_01694"/>
    </source>
</evidence>
<evidence type="ECO:0000255" key="2">
    <source>
        <dbReference type="PROSITE-ProRule" id="PRU01266"/>
    </source>
</evidence>
<sequence>MIRPALRTDWTVEEARAIHALPFPELMHRAQTLHRAHFDPTAIETASLLSIKTGGCPEDCGYCSQSAHHDTGVKATKLMAEEEVLAAARRAKAAGAQRFCMGAAWRSPKDRDMDQLCDMVRGVADLGLETCMTLGMLSPGQVARLKAAGLDFYNHNIDTSPAYYAQIASTRTMEDRLETVEQVRRGGIKVCCGGILGMGEAEEDRIALLVTLATLPAHPDSVPVNLWNEIEGVPVQGRARAVDPFALVRIVALARILMPASVVRLSAGRTEMSDELQALCFLAGANSIFVGDQLLTTGNPAAWKDRDLLSRLGLHIAPARARPPVAAD</sequence>
<accession>A3PH74</accession>
<keyword id="KW-0001">2Fe-2S</keyword>
<keyword id="KW-0004">4Fe-4S</keyword>
<keyword id="KW-0093">Biotin biosynthesis</keyword>
<keyword id="KW-0408">Iron</keyword>
<keyword id="KW-0411">Iron-sulfur</keyword>
<keyword id="KW-0479">Metal-binding</keyword>
<keyword id="KW-0949">S-adenosyl-L-methionine</keyword>
<keyword id="KW-0808">Transferase</keyword>
<name>BIOB_CERS1</name>
<dbReference type="EC" id="2.8.1.6" evidence="1"/>
<dbReference type="EMBL" id="CP000577">
    <property type="protein sequence ID" value="ABN75690.1"/>
    <property type="molecule type" value="Genomic_DNA"/>
</dbReference>
<dbReference type="RefSeq" id="WP_011840442.1">
    <property type="nucleotide sequence ID" value="NC_009049.1"/>
</dbReference>
<dbReference type="SMR" id="A3PH74"/>
<dbReference type="KEGG" id="rsh:Rsph17029_0574"/>
<dbReference type="HOGENOM" id="CLU_033172_1_2_5"/>
<dbReference type="UniPathway" id="UPA00078">
    <property type="reaction ID" value="UER00162"/>
</dbReference>
<dbReference type="GO" id="GO:0051537">
    <property type="term" value="F:2 iron, 2 sulfur cluster binding"/>
    <property type="evidence" value="ECO:0007669"/>
    <property type="project" value="UniProtKB-KW"/>
</dbReference>
<dbReference type="GO" id="GO:0051539">
    <property type="term" value="F:4 iron, 4 sulfur cluster binding"/>
    <property type="evidence" value="ECO:0007669"/>
    <property type="project" value="UniProtKB-KW"/>
</dbReference>
<dbReference type="GO" id="GO:0004076">
    <property type="term" value="F:biotin synthase activity"/>
    <property type="evidence" value="ECO:0007669"/>
    <property type="project" value="UniProtKB-UniRule"/>
</dbReference>
<dbReference type="GO" id="GO:0005506">
    <property type="term" value="F:iron ion binding"/>
    <property type="evidence" value="ECO:0007669"/>
    <property type="project" value="UniProtKB-UniRule"/>
</dbReference>
<dbReference type="GO" id="GO:0009102">
    <property type="term" value="P:biotin biosynthetic process"/>
    <property type="evidence" value="ECO:0007669"/>
    <property type="project" value="UniProtKB-UniRule"/>
</dbReference>
<dbReference type="CDD" id="cd01335">
    <property type="entry name" value="Radical_SAM"/>
    <property type="match status" value="1"/>
</dbReference>
<dbReference type="Gene3D" id="3.20.20.70">
    <property type="entry name" value="Aldolase class I"/>
    <property type="match status" value="1"/>
</dbReference>
<dbReference type="HAMAP" id="MF_01694">
    <property type="entry name" value="BioB"/>
    <property type="match status" value="1"/>
</dbReference>
<dbReference type="InterPro" id="IPR013785">
    <property type="entry name" value="Aldolase_TIM"/>
</dbReference>
<dbReference type="InterPro" id="IPR010722">
    <property type="entry name" value="BATS_dom"/>
</dbReference>
<dbReference type="InterPro" id="IPR002684">
    <property type="entry name" value="Biotin_synth/BioAB"/>
</dbReference>
<dbReference type="InterPro" id="IPR024177">
    <property type="entry name" value="Biotin_synthase"/>
</dbReference>
<dbReference type="InterPro" id="IPR006638">
    <property type="entry name" value="Elp3/MiaA/NifB-like_rSAM"/>
</dbReference>
<dbReference type="InterPro" id="IPR007197">
    <property type="entry name" value="rSAM"/>
</dbReference>
<dbReference type="NCBIfam" id="TIGR00433">
    <property type="entry name" value="bioB"/>
    <property type="match status" value="1"/>
</dbReference>
<dbReference type="PANTHER" id="PTHR22976">
    <property type="entry name" value="BIOTIN SYNTHASE"/>
    <property type="match status" value="1"/>
</dbReference>
<dbReference type="PANTHER" id="PTHR22976:SF2">
    <property type="entry name" value="BIOTIN SYNTHASE, MITOCHONDRIAL"/>
    <property type="match status" value="1"/>
</dbReference>
<dbReference type="Pfam" id="PF06968">
    <property type="entry name" value="BATS"/>
    <property type="match status" value="1"/>
</dbReference>
<dbReference type="Pfam" id="PF04055">
    <property type="entry name" value="Radical_SAM"/>
    <property type="match status" value="1"/>
</dbReference>
<dbReference type="PIRSF" id="PIRSF001619">
    <property type="entry name" value="Biotin_synth"/>
    <property type="match status" value="1"/>
</dbReference>
<dbReference type="SFLD" id="SFLDF00272">
    <property type="entry name" value="biotin_synthase"/>
    <property type="match status" value="1"/>
</dbReference>
<dbReference type="SFLD" id="SFLDS00029">
    <property type="entry name" value="Radical_SAM"/>
    <property type="match status" value="1"/>
</dbReference>
<dbReference type="SMART" id="SM00876">
    <property type="entry name" value="BATS"/>
    <property type="match status" value="1"/>
</dbReference>
<dbReference type="SMART" id="SM00729">
    <property type="entry name" value="Elp3"/>
    <property type="match status" value="1"/>
</dbReference>
<dbReference type="SUPFAM" id="SSF102114">
    <property type="entry name" value="Radical SAM enzymes"/>
    <property type="match status" value="1"/>
</dbReference>
<dbReference type="PROSITE" id="PS51918">
    <property type="entry name" value="RADICAL_SAM"/>
    <property type="match status" value="1"/>
</dbReference>
<gene>
    <name evidence="1" type="primary">bioB</name>
    <name type="ordered locus">Rsph17029_0574</name>
</gene>
<reference key="1">
    <citation type="submission" date="2007-02" db="EMBL/GenBank/DDBJ databases">
        <title>Complete sequence of chromosome 1 of Rhodobacter sphaeroides ATCC 17029.</title>
        <authorList>
            <person name="Copeland A."/>
            <person name="Lucas S."/>
            <person name="Lapidus A."/>
            <person name="Barry K."/>
            <person name="Detter J.C."/>
            <person name="Glavina del Rio T."/>
            <person name="Hammon N."/>
            <person name="Israni S."/>
            <person name="Dalin E."/>
            <person name="Tice H."/>
            <person name="Pitluck S."/>
            <person name="Kiss H."/>
            <person name="Brettin T."/>
            <person name="Bruce D."/>
            <person name="Han C."/>
            <person name="Tapia R."/>
            <person name="Gilna P."/>
            <person name="Schmutz J."/>
            <person name="Larimer F."/>
            <person name="Land M."/>
            <person name="Hauser L."/>
            <person name="Kyrpides N."/>
            <person name="Mikhailova N."/>
            <person name="Richardson P."/>
            <person name="Mackenzie C."/>
            <person name="Choudhary M."/>
            <person name="Donohue T.J."/>
            <person name="Kaplan S."/>
        </authorList>
    </citation>
    <scope>NUCLEOTIDE SEQUENCE [LARGE SCALE GENOMIC DNA]</scope>
    <source>
        <strain>ATCC 17029 / ATH 2.4.9</strain>
    </source>
</reference>
<organism>
    <name type="scientific">Cereibacter sphaeroides (strain ATCC 17029 / ATH 2.4.9)</name>
    <name type="common">Rhodobacter sphaeroides</name>
    <dbReference type="NCBI Taxonomy" id="349101"/>
    <lineage>
        <taxon>Bacteria</taxon>
        <taxon>Pseudomonadati</taxon>
        <taxon>Pseudomonadota</taxon>
        <taxon>Alphaproteobacteria</taxon>
        <taxon>Rhodobacterales</taxon>
        <taxon>Paracoccaceae</taxon>
        <taxon>Cereibacter</taxon>
    </lineage>
</organism>
<protein>
    <recommendedName>
        <fullName evidence="1">Biotin synthase</fullName>
        <ecNumber evidence="1">2.8.1.6</ecNumber>
    </recommendedName>
</protein>
<feature type="chain" id="PRO_0000381586" description="Biotin synthase">
    <location>
        <begin position="1"/>
        <end position="328"/>
    </location>
</feature>
<feature type="domain" description="Radical SAM core" evidence="2">
    <location>
        <begin position="41"/>
        <end position="260"/>
    </location>
</feature>
<feature type="binding site" evidence="1">
    <location>
        <position position="56"/>
    </location>
    <ligand>
        <name>[4Fe-4S] cluster</name>
        <dbReference type="ChEBI" id="CHEBI:49883"/>
        <note>4Fe-4S-S-AdoMet</note>
    </ligand>
</feature>
<feature type="binding site" evidence="1">
    <location>
        <position position="60"/>
    </location>
    <ligand>
        <name>[4Fe-4S] cluster</name>
        <dbReference type="ChEBI" id="CHEBI:49883"/>
        <note>4Fe-4S-S-AdoMet</note>
    </ligand>
</feature>
<feature type="binding site" evidence="1">
    <location>
        <position position="63"/>
    </location>
    <ligand>
        <name>[4Fe-4S] cluster</name>
        <dbReference type="ChEBI" id="CHEBI:49883"/>
        <note>4Fe-4S-S-AdoMet</note>
    </ligand>
</feature>
<feature type="binding site" evidence="1">
    <location>
        <position position="100"/>
    </location>
    <ligand>
        <name>[2Fe-2S] cluster</name>
        <dbReference type="ChEBI" id="CHEBI:190135"/>
    </ligand>
</feature>
<feature type="binding site" evidence="1">
    <location>
        <position position="131"/>
    </location>
    <ligand>
        <name>[2Fe-2S] cluster</name>
        <dbReference type="ChEBI" id="CHEBI:190135"/>
    </ligand>
</feature>
<feature type="binding site" evidence="1">
    <location>
        <position position="191"/>
    </location>
    <ligand>
        <name>[2Fe-2S] cluster</name>
        <dbReference type="ChEBI" id="CHEBI:190135"/>
    </ligand>
</feature>
<feature type="binding site" evidence="1">
    <location>
        <position position="264"/>
    </location>
    <ligand>
        <name>[2Fe-2S] cluster</name>
        <dbReference type="ChEBI" id="CHEBI:190135"/>
    </ligand>
</feature>